<evidence type="ECO:0000255" key="1"/>
<evidence type="ECO:0000255" key="2">
    <source>
        <dbReference type="PROSITE-ProRule" id="PRU01094"/>
    </source>
</evidence>
<evidence type="ECO:0000256" key="3">
    <source>
        <dbReference type="SAM" id="MobiDB-lite"/>
    </source>
</evidence>
<evidence type="ECO:0000269" key="4">
    <source>
    </source>
</evidence>
<evidence type="ECO:0000305" key="5"/>
<organism>
    <name type="scientific">Rattus norvegicus</name>
    <name type="common">Rat</name>
    <dbReference type="NCBI Taxonomy" id="10116"/>
    <lineage>
        <taxon>Eukaryota</taxon>
        <taxon>Metazoa</taxon>
        <taxon>Chordata</taxon>
        <taxon>Craniata</taxon>
        <taxon>Vertebrata</taxon>
        <taxon>Euteleostomi</taxon>
        <taxon>Mammalia</taxon>
        <taxon>Eutheria</taxon>
        <taxon>Euarchontoglires</taxon>
        <taxon>Glires</taxon>
        <taxon>Rodentia</taxon>
        <taxon>Myomorpha</taxon>
        <taxon>Muroidea</taxon>
        <taxon>Muridae</taxon>
        <taxon>Murinae</taxon>
        <taxon>Rattus</taxon>
    </lineage>
</organism>
<name>LETM2_RAT</name>
<comment type="subcellular location">
    <subcellularLocation>
        <location evidence="4">Mitochondrion inner membrane</location>
        <topology evidence="4">Single-pass membrane protein</topology>
    </subcellularLocation>
</comment>
<comment type="alternative products">
    <event type="alternative splicing"/>
    <isoform>
        <id>Q5PQQ5-1</id>
        <name>1</name>
        <sequence type="displayed"/>
    </isoform>
    <isoform>
        <id>Q5PQQ5-2</id>
        <name>2</name>
        <name>LETM2S</name>
        <sequence type="described" ref="VSP_037817"/>
    </isoform>
</comment>
<comment type="tissue specificity">
    <text evidence="4">Testis and sperm.</text>
</comment>
<comment type="developmental stage">
    <text evidence="4">Expressed in the developmental stages from spermatocyte to spermatozoon.</text>
</comment>
<comment type="caution">
    <text evidence="5">Despite its name, it does not contain any EF-hand domains.</text>
</comment>
<gene>
    <name type="primary">Letm2</name>
</gene>
<proteinExistence type="evidence at transcript level"/>
<protein>
    <recommendedName>
        <fullName>LETM1 domain-containing protein LETM2, mitochondrial</fullName>
    </recommendedName>
    <alternativeName>
        <fullName>LETM1 and EF-hand domain-containing protein 2</fullName>
    </alternativeName>
    <alternativeName>
        <fullName>Leucine zipper-EF-hand-containing transmembrane protein 1-like</fullName>
    </alternativeName>
</protein>
<keyword id="KW-0025">Alternative splicing</keyword>
<keyword id="KW-0472">Membrane</keyword>
<keyword id="KW-0496">Mitochondrion</keyword>
<keyword id="KW-0999">Mitochondrion inner membrane</keyword>
<keyword id="KW-1185">Reference proteome</keyword>
<keyword id="KW-0809">Transit peptide</keyword>
<keyword id="KW-0812">Transmembrane</keyword>
<keyword id="KW-1133">Transmembrane helix</keyword>
<feature type="transit peptide" description="Mitochondrion" evidence="1">
    <location>
        <begin position="1"/>
        <end position="25"/>
    </location>
</feature>
<feature type="chain" id="PRO_0000307139" description="LETM1 domain-containing protein LETM2, mitochondrial">
    <location>
        <begin position="26"/>
        <end position="459"/>
    </location>
</feature>
<feature type="topological domain" description="Mitochondrial intermembrane" evidence="1">
    <location>
        <begin position="26"/>
        <end position="176"/>
    </location>
</feature>
<feature type="transmembrane region" description="Helical" evidence="1">
    <location>
        <begin position="177"/>
        <end position="197"/>
    </location>
</feature>
<feature type="topological domain" description="Mitochondrial matrix" evidence="1">
    <location>
        <begin position="198"/>
        <end position="459"/>
    </location>
</feature>
<feature type="domain" description="Letm1 RBD" evidence="2">
    <location>
        <begin position="220"/>
        <end position="440"/>
    </location>
</feature>
<feature type="region of interest" description="Disordered" evidence="3">
    <location>
        <begin position="88"/>
        <end position="114"/>
    </location>
</feature>
<feature type="region of interest" description="Disordered" evidence="3">
    <location>
        <begin position="403"/>
        <end position="459"/>
    </location>
</feature>
<feature type="compositionally biased region" description="Basic and acidic residues" evidence="3">
    <location>
        <begin position="97"/>
        <end position="111"/>
    </location>
</feature>
<feature type="compositionally biased region" description="Polar residues" evidence="3">
    <location>
        <begin position="435"/>
        <end position="459"/>
    </location>
</feature>
<feature type="splice variant" id="VSP_037817" description="In isoform 2." evidence="5">
    <location>
        <begin position="167"/>
        <end position="214"/>
    </location>
</feature>
<sequence>MAFYSYNSFLAIFWTRLPGHSVHPPCSHFPPLAFFHLPDSHLRTAYMKNCGSRKYSYPGLTGNNKVHPLRTRLPQKLHTTCWLQNHPGKPQPEQIPEEPKATDPQPTKDDQTEVAEGKWSLRQKIIDEVKYYYNGFSLLWIDTKVAARIVWRLLHGQVLTRRERRRLLRTCADVFRLVPFVVFIIVPFMEFLIPVFLKLFPDMLPSTFESESKKEEKQKKMMGAKLEIAKFLQETMTEMAKRNRAKLDDDSSDSSQLSSYVKQVQTGHKPSTKEIVRFSKLFEDQLALEHLRRPQLVALCKLLELQAFGTNNLLRFQLLMTLRSIKADDEVIAKEGVKALSVSELQAACRARGMRSLGLTEEQLRQQLTEWLDLHLKENVPPSLLLLSRTFYLIDVKPKPIELPPSIETPKTNLGIPSSPPPESKEDITDPAPQLNGTKILQAKSQETSQNSKANSKGA</sequence>
<reference key="1">
    <citation type="journal article" date="2008" name="J. Cell Sci.">
        <title>Characterization of the mitochondrial protein LETM1, which maintains the mitochondrial tubular shapes and interacts with the AAA-ATPase BCS1L.</title>
        <authorList>
            <person name="Tamai S."/>
            <person name="Iida H."/>
            <person name="Yokota S."/>
            <person name="Sayano T."/>
            <person name="Kiguchiya S."/>
            <person name="Ishihara N."/>
            <person name="Hayashi J."/>
            <person name="Mihara K."/>
            <person name="Oka T."/>
        </authorList>
    </citation>
    <scope>NUCLEOTIDE SEQUENCE [GENOMIC DNA] (ISOFORMS 1 AND 2)</scope>
    <scope>SUBCELLULAR LOCATION</scope>
    <scope>TISSUE SPECIFICITY</scope>
    <scope>DEVELOPMENTAL STAGE</scope>
</reference>
<reference key="2">
    <citation type="journal article" date="2004" name="Genome Res.">
        <title>The status, quality, and expansion of the NIH full-length cDNA project: the Mammalian Gene Collection (MGC).</title>
        <authorList>
            <consortium name="The MGC Project Team"/>
        </authorList>
    </citation>
    <scope>NUCLEOTIDE SEQUENCE [LARGE SCALE MRNA] (ISOFORM 1)</scope>
    <source>
        <tissue>Testis</tissue>
    </source>
</reference>
<accession>Q5PQQ5</accession>
<accession>A7VL16</accession>
<dbReference type="EMBL" id="AB296367">
    <property type="protein sequence ID" value="BAF79864.1"/>
    <property type="molecule type" value="Genomic_DNA"/>
</dbReference>
<dbReference type="EMBL" id="AB296368">
    <property type="protein sequence ID" value="BAF79865.1"/>
    <property type="molecule type" value="Genomic_DNA"/>
</dbReference>
<dbReference type="EMBL" id="BC087079">
    <property type="protein sequence ID" value="AAH87079.1"/>
    <property type="molecule type" value="mRNA"/>
</dbReference>
<dbReference type="RefSeq" id="NP_001012158.1">
    <molecule id="Q5PQQ5-1"/>
    <property type="nucleotide sequence ID" value="NM_001012158.1"/>
</dbReference>
<dbReference type="RefSeq" id="NP_001421348.1">
    <molecule id="Q5PQQ5-1"/>
    <property type="nucleotide sequence ID" value="NM_001434419.1"/>
</dbReference>
<dbReference type="RefSeq" id="NP_001421349.1">
    <molecule id="Q5PQQ5-1"/>
    <property type="nucleotide sequence ID" value="NM_001434420.1"/>
</dbReference>
<dbReference type="RefSeq" id="NP_001421355.1">
    <molecule id="Q5PQQ5-2"/>
    <property type="nucleotide sequence ID" value="NM_001434426.1"/>
</dbReference>
<dbReference type="RefSeq" id="XP_038950593.1">
    <molecule id="Q5PQQ5-1"/>
    <property type="nucleotide sequence ID" value="XM_039094665.2"/>
</dbReference>
<dbReference type="RefSeq" id="XP_063131615.1">
    <molecule id="Q5PQQ5-1"/>
    <property type="nucleotide sequence ID" value="XM_063275545.1"/>
</dbReference>
<dbReference type="RefSeq" id="XP_063131616.1">
    <molecule id="Q5PQQ5-1"/>
    <property type="nucleotide sequence ID" value="XM_063275546.1"/>
</dbReference>
<dbReference type="RefSeq" id="XP_063131617.1">
    <molecule id="Q5PQQ5-1"/>
    <property type="nucleotide sequence ID" value="XM_063275547.1"/>
</dbReference>
<dbReference type="RefSeq" id="XP_063131618.1">
    <molecule id="Q5PQQ5-1"/>
    <property type="nucleotide sequence ID" value="XM_063275548.1"/>
</dbReference>
<dbReference type="RefSeq" id="XP_063131619.1">
    <molecule id="Q5PQQ5-1"/>
    <property type="nucleotide sequence ID" value="XM_063275549.1"/>
</dbReference>
<dbReference type="RefSeq" id="XP_063131622.1">
    <molecule id="Q5PQQ5-1"/>
    <property type="nucleotide sequence ID" value="XM_063275552.1"/>
</dbReference>
<dbReference type="RefSeq" id="XP_063131624.1">
    <molecule id="Q5PQQ5-1"/>
    <property type="nucleotide sequence ID" value="XM_063275554.1"/>
</dbReference>
<dbReference type="RefSeq" id="XP_063131635.1">
    <molecule id="Q5PQQ5-2"/>
    <property type="nucleotide sequence ID" value="XM_063275565.1"/>
</dbReference>
<dbReference type="RefSeq" id="XP_063131636.1">
    <molecule id="Q5PQQ5-2"/>
    <property type="nucleotide sequence ID" value="XM_063275566.1"/>
</dbReference>
<dbReference type="RefSeq" id="XP_063131638.1">
    <molecule id="Q5PQQ5-2"/>
    <property type="nucleotide sequence ID" value="XM_063275568.1"/>
</dbReference>
<dbReference type="SMR" id="Q5PQQ5"/>
<dbReference type="FunCoup" id="Q5PQQ5">
    <property type="interactions" value="743"/>
</dbReference>
<dbReference type="STRING" id="10116.ENSRNOP00000062009"/>
<dbReference type="PhosphoSitePlus" id="Q5PQQ5"/>
<dbReference type="PaxDb" id="10116-ENSRNOP00000062009"/>
<dbReference type="Ensembl" id="ENSRNOT00000030489.7">
    <molecule id="Q5PQQ5-2"/>
    <property type="protein sequence ID" value="ENSRNOP00000032494.7"/>
    <property type="gene ID" value="ENSRNOG00000026180.8"/>
</dbReference>
<dbReference type="GeneID" id="361169"/>
<dbReference type="KEGG" id="rno:361169"/>
<dbReference type="UCSC" id="RGD:1311220">
    <molecule id="Q5PQQ5-1"/>
    <property type="organism name" value="rat"/>
</dbReference>
<dbReference type="AGR" id="RGD:1311220"/>
<dbReference type="CTD" id="137994"/>
<dbReference type="RGD" id="1311220">
    <property type="gene designation" value="Letm2"/>
</dbReference>
<dbReference type="eggNOG" id="KOG1043">
    <property type="taxonomic scope" value="Eukaryota"/>
</dbReference>
<dbReference type="GeneTree" id="ENSGT00950000183167"/>
<dbReference type="InParanoid" id="Q5PQQ5"/>
<dbReference type="PhylomeDB" id="Q5PQQ5"/>
<dbReference type="PRO" id="PR:Q5PQQ5"/>
<dbReference type="Proteomes" id="UP000002494">
    <property type="component" value="Chromosome 16"/>
</dbReference>
<dbReference type="GO" id="GO:0005743">
    <property type="term" value="C:mitochondrial inner membrane"/>
    <property type="evidence" value="ECO:0007669"/>
    <property type="project" value="UniProtKB-SubCell"/>
</dbReference>
<dbReference type="GO" id="GO:0005739">
    <property type="term" value="C:mitochondrion"/>
    <property type="evidence" value="ECO:0000318"/>
    <property type="project" value="GO_Central"/>
</dbReference>
<dbReference type="GO" id="GO:0043022">
    <property type="term" value="F:ribosome binding"/>
    <property type="evidence" value="ECO:0007669"/>
    <property type="project" value="InterPro"/>
</dbReference>
<dbReference type="GO" id="GO:0022857">
    <property type="term" value="F:transmembrane transporter activity"/>
    <property type="evidence" value="ECO:0000318"/>
    <property type="project" value="GO_Central"/>
</dbReference>
<dbReference type="GO" id="GO:0006851">
    <property type="term" value="P:mitochondrial calcium ion transmembrane transport"/>
    <property type="evidence" value="ECO:0000318"/>
    <property type="project" value="GO_Central"/>
</dbReference>
<dbReference type="GO" id="GO:0007005">
    <property type="term" value="P:mitochondrion organization"/>
    <property type="evidence" value="ECO:0000318"/>
    <property type="project" value="GO_Central"/>
</dbReference>
<dbReference type="InterPro" id="IPR033122">
    <property type="entry name" value="LETM1-like_RBD"/>
</dbReference>
<dbReference type="InterPro" id="IPR044202">
    <property type="entry name" value="LETM1/MDM38-like"/>
</dbReference>
<dbReference type="InterPro" id="IPR045742">
    <property type="entry name" value="LETM2_N"/>
</dbReference>
<dbReference type="PANTHER" id="PTHR14009:SF7">
    <property type="entry name" value="LETM1 DOMAIN-CONTAINING PROTEIN LETM2, MITOCHONDRIAL"/>
    <property type="match status" value="1"/>
</dbReference>
<dbReference type="PANTHER" id="PTHR14009">
    <property type="entry name" value="LEUCINE ZIPPER-EF-HAND CONTAINING TRANSMEMBRANE PROTEIN"/>
    <property type="match status" value="1"/>
</dbReference>
<dbReference type="Pfam" id="PF07766">
    <property type="entry name" value="LETM1_RBD"/>
    <property type="match status" value="1"/>
</dbReference>
<dbReference type="Pfam" id="PF19324">
    <property type="entry name" value="LETM2_N"/>
    <property type="match status" value="1"/>
</dbReference>
<dbReference type="PROSITE" id="PS51758">
    <property type="entry name" value="LETM1_RBD"/>
    <property type="match status" value="1"/>
</dbReference>